<protein>
    <recommendedName>
        <fullName evidence="4">Transcription factor oryO</fullName>
    </recommendedName>
    <alternativeName>
        <fullName evidence="4">Oryzines biosynthesis cluster protein O</fullName>
    </alternativeName>
</protein>
<dbReference type="EMBL" id="BA000056">
    <property type="protein sequence ID" value="BAE66061.1"/>
    <property type="molecule type" value="Genomic_DNA"/>
</dbReference>
<dbReference type="EnsemblFungi" id="BAE66061">
    <property type="protein sequence ID" value="BAE66061"/>
    <property type="gene ID" value="AO090010000159"/>
</dbReference>
<dbReference type="HOGENOM" id="CLU_366887_0_0_1"/>
<dbReference type="OMA" id="LKNCDRA"/>
<dbReference type="Proteomes" id="UP000006564">
    <property type="component" value="Chromosome 8"/>
</dbReference>
<dbReference type="GO" id="GO:0005634">
    <property type="term" value="C:nucleus"/>
    <property type="evidence" value="ECO:0007669"/>
    <property type="project" value="UniProtKB-SubCell"/>
</dbReference>
<dbReference type="GO" id="GO:0003677">
    <property type="term" value="F:DNA binding"/>
    <property type="evidence" value="ECO:0007669"/>
    <property type="project" value="UniProtKB-KW"/>
</dbReference>
<dbReference type="GO" id="GO:0000981">
    <property type="term" value="F:DNA-binding transcription factor activity, RNA polymerase II-specific"/>
    <property type="evidence" value="ECO:0007669"/>
    <property type="project" value="InterPro"/>
</dbReference>
<dbReference type="GO" id="GO:0008270">
    <property type="term" value="F:zinc ion binding"/>
    <property type="evidence" value="ECO:0007669"/>
    <property type="project" value="InterPro"/>
</dbReference>
<dbReference type="GO" id="GO:0006351">
    <property type="term" value="P:DNA-templated transcription"/>
    <property type="evidence" value="ECO:0007669"/>
    <property type="project" value="InterPro"/>
</dbReference>
<dbReference type="GO" id="GO:0009893">
    <property type="term" value="P:positive regulation of metabolic process"/>
    <property type="evidence" value="ECO:0007669"/>
    <property type="project" value="UniProtKB-ARBA"/>
</dbReference>
<dbReference type="CDD" id="cd12148">
    <property type="entry name" value="fungal_TF_MHR"/>
    <property type="match status" value="1"/>
</dbReference>
<dbReference type="CDD" id="cd00067">
    <property type="entry name" value="GAL4"/>
    <property type="match status" value="1"/>
</dbReference>
<dbReference type="Gene3D" id="4.10.240.10">
    <property type="entry name" value="Zn(2)-C6 fungal-type DNA-binding domain"/>
    <property type="match status" value="1"/>
</dbReference>
<dbReference type="InterPro" id="IPR050987">
    <property type="entry name" value="AtrR-like"/>
</dbReference>
<dbReference type="InterPro" id="IPR007219">
    <property type="entry name" value="Transcription_factor_dom_fun"/>
</dbReference>
<dbReference type="InterPro" id="IPR036864">
    <property type="entry name" value="Zn2-C6_fun-type_DNA-bd_sf"/>
</dbReference>
<dbReference type="InterPro" id="IPR001138">
    <property type="entry name" value="Zn2Cys6_DnaBD"/>
</dbReference>
<dbReference type="PANTHER" id="PTHR46910:SF3">
    <property type="entry name" value="HALOTOLERANCE PROTEIN 9-RELATED"/>
    <property type="match status" value="1"/>
</dbReference>
<dbReference type="PANTHER" id="PTHR46910">
    <property type="entry name" value="TRANSCRIPTION FACTOR PDR1"/>
    <property type="match status" value="1"/>
</dbReference>
<dbReference type="Pfam" id="PF04082">
    <property type="entry name" value="Fungal_trans"/>
    <property type="match status" value="1"/>
</dbReference>
<dbReference type="Pfam" id="PF00172">
    <property type="entry name" value="Zn_clus"/>
    <property type="match status" value="1"/>
</dbReference>
<dbReference type="SMART" id="SM00066">
    <property type="entry name" value="GAL4"/>
    <property type="match status" value="1"/>
</dbReference>
<dbReference type="SUPFAM" id="SSF57701">
    <property type="entry name" value="Zn2/Cys6 DNA-binding domain"/>
    <property type="match status" value="1"/>
</dbReference>
<dbReference type="PROSITE" id="PS00463">
    <property type="entry name" value="ZN2_CY6_FUNGAL_1"/>
    <property type="match status" value="1"/>
</dbReference>
<dbReference type="PROSITE" id="PS50048">
    <property type="entry name" value="ZN2_CY6_FUNGAL_2"/>
    <property type="match status" value="1"/>
</dbReference>
<feature type="chain" id="PRO_0000450489" description="Transcription factor oryO">
    <location>
        <begin position="1"/>
        <end position="814"/>
    </location>
</feature>
<feature type="DNA-binding region" description="Zn(2)-C6 fungal-type" evidence="1">
    <location>
        <begin position="58"/>
        <end position="85"/>
    </location>
</feature>
<feature type="region of interest" description="Disordered" evidence="2">
    <location>
        <begin position="1"/>
        <end position="59"/>
    </location>
</feature>
<feature type="region of interest" description="Disordered" evidence="2">
    <location>
        <begin position="699"/>
        <end position="723"/>
    </location>
</feature>
<feature type="compositionally biased region" description="Polar residues" evidence="2">
    <location>
        <begin position="16"/>
        <end position="27"/>
    </location>
</feature>
<feature type="compositionally biased region" description="Polar residues" evidence="2">
    <location>
        <begin position="49"/>
        <end position="59"/>
    </location>
</feature>
<feature type="compositionally biased region" description="Low complexity" evidence="2">
    <location>
        <begin position="713"/>
        <end position="723"/>
    </location>
</feature>
<comment type="function">
    <text evidence="3">Transcription factor that regulates the expression of the gene cluster that mediates the biosynthesis of oryzines, natural products with an unusual maleidride backbone.</text>
</comment>
<comment type="subcellular location">
    <subcellularLocation>
        <location evidence="1">Nucleus</location>
    </subcellularLocation>
</comment>
<reference key="1">
    <citation type="journal article" date="2005" name="Nature">
        <title>Genome sequencing and analysis of Aspergillus oryzae.</title>
        <authorList>
            <person name="Machida M."/>
            <person name="Asai K."/>
            <person name="Sano M."/>
            <person name="Tanaka T."/>
            <person name="Kumagai T."/>
            <person name="Terai G."/>
            <person name="Kusumoto K."/>
            <person name="Arima T."/>
            <person name="Akita O."/>
            <person name="Kashiwagi Y."/>
            <person name="Abe K."/>
            <person name="Gomi K."/>
            <person name="Horiuchi H."/>
            <person name="Kitamoto K."/>
            <person name="Kobayashi T."/>
            <person name="Takeuchi M."/>
            <person name="Denning D.W."/>
            <person name="Galagan J.E."/>
            <person name="Nierman W.C."/>
            <person name="Yu J."/>
            <person name="Archer D.B."/>
            <person name="Bennett J.W."/>
            <person name="Bhatnagar D."/>
            <person name="Cleveland T.E."/>
            <person name="Fedorova N.D."/>
            <person name="Gotoh O."/>
            <person name="Horikawa H."/>
            <person name="Hosoyama A."/>
            <person name="Ichinomiya M."/>
            <person name="Igarashi R."/>
            <person name="Iwashita K."/>
            <person name="Juvvadi P.R."/>
            <person name="Kato M."/>
            <person name="Kato Y."/>
            <person name="Kin T."/>
            <person name="Kokubun A."/>
            <person name="Maeda H."/>
            <person name="Maeyama N."/>
            <person name="Maruyama J."/>
            <person name="Nagasaki H."/>
            <person name="Nakajima T."/>
            <person name="Oda K."/>
            <person name="Okada K."/>
            <person name="Paulsen I."/>
            <person name="Sakamoto K."/>
            <person name="Sawano T."/>
            <person name="Takahashi M."/>
            <person name="Takase K."/>
            <person name="Terabayashi Y."/>
            <person name="Wortman J.R."/>
            <person name="Yamada O."/>
            <person name="Yamagata Y."/>
            <person name="Anazawa H."/>
            <person name="Hata Y."/>
            <person name="Koide Y."/>
            <person name="Komori T."/>
            <person name="Koyama Y."/>
            <person name="Minetoki T."/>
            <person name="Suharnan S."/>
            <person name="Tanaka A."/>
            <person name="Isono K."/>
            <person name="Kuhara S."/>
            <person name="Ogasawara N."/>
            <person name="Kikuchi H."/>
        </authorList>
    </citation>
    <scope>NUCLEOTIDE SEQUENCE [LARGE SCALE GENOMIC DNA]</scope>
    <source>
        <strain>ATCC 42149 / RIB 40</strain>
    </source>
</reference>
<reference key="2">
    <citation type="journal article" date="2018" name="J. Fungi">
        <title>Oryzines A &amp; B, maleidride congeners from Aspergillus oryzae and their putative biosynthesis.</title>
        <authorList>
            <person name="Wasil Z."/>
            <person name="Kuhnert E."/>
            <person name="Simpson T.J."/>
            <person name="Cox R.J."/>
        </authorList>
    </citation>
    <scope>FUNCTION</scope>
</reference>
<evidence type="ECO:0000255" key="1">
    <source>
        <dbReference type="PROSITE-ProRule" id="PRU00227"/>
    </source>
</evidence>
<evidence type="ECO:0000256" key="2">
    <source>
        <dbReference type="SAM" id="MobiDB-lite"/>
    </source>
</evidence>
<evidence type="ECO:0000269" key="3">
    <source>
    </source>
</evidence>
<evidence type="ECO:0000303" key="4">
    <source>
    </source>
</evidence>
<keyword id="KW-0238">DNA-binding</keyword>
<keyword id="KW-0479">Metal-binding</keyword>
<keyword id="KW-0539">Nucleus</keyword>
<keyword id="KW-1185">Reference proteome</keyword>
<keyword id="KW-0804">Transcription</keyword>
<keyword id="KW-0805">Transcription regulation</keyword>
<keyword id="KW-0862">Zinc</keyword>
<organism>
    <name type="scientific">Aspergillus oryzae (strain ATCC 42149 / RIB 40)</name>
    <name type="common">Yellow koji mold</name>
    <dbReference type="NCBI Taxonomy" id="510516"/>
    <lineage>
        <taxon>Eukaryota</taxon>
        <taxon>Fungi</taxon>
        <taxon>Dikarya</taxon>
        <taxon>Ascomycota</taxon>
        <taxon>Pezizomycotina</taxon>
        <taxon>Eurotiomycetes</taxon>
        <taxon>Eurotiomycetidae</taxon>
        <taxon>Eurotiales</taxon>
        <taxon>Aspergillaceae</taxon>
        <taxon>Aspergillus</taxon>
        <taxon>Aspergillus subgen. Circumdati</taxon>
    </lineage>
</organism>
<gene>
    <name evidence="4" type="primary">oryO</name>
    <name type="ORF">AO090010000159</name>
</gene>
<accession>Q2TXG2</accession>
<name>ORYO_ASPOR</name>
<sequence>MTARTPNRATGAPENANPTVRDQTQQDQGERSESPAIPSLTNKKRPRSQPDNTSSPACNQCRTRKIRCDRQQPKCSNCRRADVECDFATTPKRVDRTKQLLNDFSGVVARLDRVDNSLAKLSEQLQQQQPCRCSHSPVPSQVDNPWGASEPAAIYTTYTPKSSTSCRSPHLMEVDGSEDCDPEIPNGDLVDFDQGGQRLLDYPAALSLFKNLQRQITRWLTKDVPQGSELWQVIAQQPGFKASLEYQLEQFPFGGLCHEPVIVSDHRPISTPPRYLLELSLDGFLRHINIHTPIFDDSSLGKAIDTHYQSLSAGTGDAWALTFTNIIILTVALDARVARATASHLVSMNDDMLPSFLKNCDRALADLNRFTAPCLINVQVLLTLVRMVINFPEAYIRALVAREFYGSVVFEKVCQAVCQVARSTGLHRAHGARSMRWEKMPERERLFWVVYTMDKQRAFLTGQPCDLYLFDSDIQLRSCGERAPFPLRLNAAYVHMMTIWEQIFINLYSSRAVLAGAADRSRQVQQLWGSLNEWNIKYHALLSSPILEKMADLAPMQLELKYCFMVSQVLVHRCDRNARSQQRYRDPARSALKLIAQVAGDHRSITLARCAVLARMFRNYPLVAVHDLFSFCLTDGEPDSTEDGQLIHETRRHLELLHYADFPQAYFARLEVGLKWCTDMLDTIKDCLSRSAVAGDWGPMDGSSTGLSDRTPPSESELSSIPPDAWASLNLPMSRDEMLCGLSPSVPSEGLLDPQFSAFGLTTSSTGDSTVPAFAQGGDNPAVTMHPSMWVPAEVPCNSSEPLFDPEFTRSIMS</sequence>
<proteinExistence type="inferred from homology"/>